<name>SCPA_CLOP1</name>
<feature type="chain" id="PRO_1000069969" description="Segregation and condensation protein A">
    <location>
        <begin position="1"/>
        <end position="248"/>
    </location>
</feature>
<keyword id="KW-0131">Cell cycle</keyword>
<keyword id="KW-0132">Cell division</keyword>
<keyword id="KW-0159">Chromosome partition</keyword>
<keyword id="KW-0963">Cytoplasm</keyword>
<evidence type="ECO:0000255" key="1">
    <source>
        <dbReference type="HAMAP-Rule" id="MF_01805"/>
    </source>
</evidence>
<organism>
    <name type="scientific">Clostridium perfringens (strain ATCC 13124 / DSM 756 / JCM 1290 / NCIMB 6125 / NCTC 8237 / Type A)</name>
    <dbReference type="NCBI Taxonomy" id="195103"/>
    <lineage>
        <taxon>Bacteria</taxon>
        <taxon>Bacillati</taxon>
        <taxon>Bacillota</taxon>
        <taxon>Clostridia</taxon>
        <taxon>Eubacteriales</taxon>
        <taxon>Clostridiaceae</taxon>
        <taxon>Clostridium</taxon>
    </lineage>
</organism>
<reference key="1">
    <citation type="journal article" date="2006" name="Genome Res.">
        <title>Skewed genomic variability in strains of the toxigenic bacterial pathogen, Clostridium perfringens.</title>
        <authorList>
            <person name="Myers G.S.A."/>
            <person name="Rasko D.A."/>
            <person name="Cheung J.K."/>
            <person name="Ravel J."/>
            <person name="Seshadri R."/>
            <person name="DeBoy R.T."/>
            <person name="Ren Q."/>
            <person name="Varga J."/>
            <person name="Awad M.M."/>
            <person name="Brinkac L.M."/>
            <person name="Daugherty S.C."/>
            <person name="Haft D.H."/>
            <person name="Dodson R.J."/>
            <person name="Madupu R."/>
            <person name="Nelson W.C."/>
            <person name="Rosovitz M.J."/>
            <person name="Sullivan S.A."/>
            <person name="Khouri H."/>
            <person name="Dimitrov G.I."/>
            <person name="Watkins K.L."/>
            <person name="Mulligan S."/>
            <person name="Benton J."/>
            <person name="Radune D."/>
            <person name="Fisher D.J."/>
            <person name="Atkins H.S."/>
            <person name="Hiscox T."/>
            <person name="Jost B.H."/>
            <person name="Billington S.J."/>
            <person name="Songer J.G."/>
            <person name="McClane B.A."/>
            <person name="Titball R.W."/>
            <person name="Rood J.I."/>
            <person name="Melville S.B."/>
            <person name="Paulsen I.T."/>
        </authorList>
    </citation>
    <scope>NUCLEOTIDE SEQUENCE [LARGE SCALE GENOMIC DNA]</scope>
    <source>
        <strain>ATCC 13124 / DSM 756 / JCM 1290 / NCIMB 6125 / NCTC 8237 / S 107 / Type A</strain>
    </source>
</reference>
<sequence>MEMPIIKLKNFDGPFDLLLHLIKKNEMSITEIKIHEITKQYLEYIALMKELDLEITSEFIVMAATLIEIKSKSLLPKVKVEDETCEEDLQKILMEKLQEYKKFKKISAYLRERELSTGEVFTKKAEIIEVEVDNKLDDDYFKNITMLDLYKLYNNLMRIYGEKQNVNVMEKKISVDKYKITDKINFLRDKLSEKSIVRFSEFIPQCECKLEVVVTFMAMLELIKRSEIKVVQYENFGEIMMEKVIVNE</sequence>
<gene>
    <name evidence="1" type="primary">scpA</name>
    <name type="ordered locus">CPF_2060</name>
</gene>
<accession>Q0TPF1</accession>
<proteinExistence type="inferred from homology"/>
<protein>
    <recommendedName>
        <fullName evidence="1">Segregation and condensation protein A</fullName>
    </recommendedName>
</protein>
<dbReference type="EMBL" id="CP000246">
    <property type="protein sequence ID" value="ABG83911.1"/>
    <property type="molecule type" value="Genomic_DNA"/>
</dbReference>
<dbReference type="RefSeq" id="WP_003458723.1">
    <property type="nucleotide sequence ID" value="NC_008261.1"/>
</dbReference>
<dbReference type="SMR" id="Q0TPF1"/>
<dbReference type="STRING" id="195103.CPF_2060"/>
<dbReference type="PaxDb" id="195103-CPF_2060"/>
<dbReference type="KEGG" id="cpf:CPF_2060"/>
<dbReference type="eggNOG" id="COG1354">
    <property type="taxonomic scope" value="Bacteria"/>
</dbReference>
<dbReference type="HOGENOM" id="CLU_038686_3_0_9"/>
<dbReference type="Proteomes" id="UP000001823">
    <property type="component" value="Chromosome"/>
</dbReference>
<dbReference type="GO" id="GO:0005737">
    <property type="term" value="C:cytoplasm"/>
    <property type="evidence" value="ECO:0007669"/>
    <property type="project" value="UniProtKB-SubCell"/>
</dbReference>
<dbReference type="GO" id="GO:0051301">
    <property type="term" value="P:cell division"/>
    <property type="evidence" value="ECO:0007669"/>
    <property type="project" value="UniProtKB-KW"/>
</dbReference>
<dbReference type="GO" id="GO:0007059">
    <property type="term" value="P:chromosome segregation"/>
    <property type="evidence" value="ECO:0007669"/>
    <property type="project" value="UniProtKB-UniRule"/>
</dbReference>
<dbReference type="GO" id="GO:0006260">
    <property type="term" value="P:DNA replication"/>
    <property type="evidence" value="ECO:0007669"/>
    <property type="project" value="UniProtKB-UniRule"/>
</dbReference>
<dbReference type="Gene3D" id="6.10.250.2410">
    <property type="match status" value="1"/>
</dbReference>
<dbReference type="Gene3D" id="1.10.10.580">
    <property type="entry name" value="Structural maintenance of chromosome 1. Chain E"/>
    <property type="match status" value="1"/>
</dbReference>
<dbReference type="HAMAP" id="MF_01805">
    <property type="entry name" value="ScpA"/>
    <property type="match status" value="1"/>
</dbReference>
<dbReference type="InterPro" id="IPR003768">
    <property type="entry name" value="ScpA"/>
</dbReference>
<dbReference type="InterPro" id="IPR023093">
    <property type="entry name" value="ScpA-like_C"/>
</dbReference>
<dbReference type="NCBIfam" id="NF000994">
    <property type="entry name" value="PRK00104.1-3"/>
    <property type="match status" value="1"/>
</dbReference>
<dbReference type="PANTHER" id="PTHR33969">
    <property type="entry name" value="SEGREGATION AND CONDENSATION PROTEIN A"/>
    <property type="match status" value="1"/>
</dbReference>
<dbReference type="PANTHER" id="PTHR33969:SF2">
    <property type="entry name" value="SEGREGATION AND CONDENSATION PROTEIN A"/>
    <property type="match status" value="1"/>
</dbReference>
<dbReference type="Pfam" id="PF02616">
    <property type="entry name" value="SMC_ScpA"/>
    <property type="match status" value="1"/>
</dbReference>
<comment type="function">
    <text evidence="1">Participates in chromosomal partition during cell division. May act via the formation of a condensin-like complex containing Smc and ScpB that pull DNA away from mid-cell into both cell halves.</text>
</comment>
<comment type="subunit">
    <text evidence="1">Component of a cohesin-like complex composed of ScpA, ScpB and the Smc homodimer, in which ScpA and ScpB bind to the head domain of Smc. The presence of the three proteins is required for the association of the complex with DNA.</text>
</comment>
<comment type="subcellular location">
    <subcellularLocation>
        <location evidence="1">Cytoplasm</location>
    </subcellularLocation>
    <text evidence="1">Associated with two foci at the outer edges of the nucleoid region in young cells, and at four foci within both cell halves in older cells.</text>
</comment>
<comment type="similarity">
    <text evidence="1">Belongs to the ScpA family.</text>
</comment>